<protein>
    <recommendedName>
        <fullName evidence="1">Glutamate--tRNA ligase</fullName>
        <ecNumber evidence="1">6.1.1.17</ecNumber>
    </recommendedName>
    <alternativeName>
        <fullName evidence="1">Glutamyl-tRNA synthetase</fullName>
        <shortName evidence="1">GluRS</shortName>
    </alternativeName>
</protein>
<proteinExistence type="inferred from homology"/>
<evidence type="ECO:0000255" key="1">
    <source>
        <dbReference type="HAMAP-Rule" id="MF_00022"/>
    </source>
</evidence>
<reference key="1">
    <citation type="journal article" date="2004" name="Proc. Natl. Acad. Sci. U.S.A.">
        <title>The genome sequence of the probiotic intestinal bacterium Lactobacillus johnsonii NCC 533.</title>
        <authorList>
            <person name="Pridmore R.D."/>
            <person name="Berger B."/>
            <person name="Desiere F."/>
            <person name="Vilanova D."/>
            <person name="Barretto C."/>
            <person name="Pittet A.-C."/>
            <person name="Zwahlen M.-C."/>
            <person name="Rouvet M."/>
            <person name="Altermann E."/>
            <person name="Barrangou R."/>
            <person name="Mollet B."/>
            <person name="Mercenier A."/>
            <person name="Klaenhammer T."/>
            <person name="Arigoni F."/>
            <person name="Schell M.A."/>
        </authorList>
    </citation>
    <scope>NUCLEOTIDE SEQUENCE [LARGE SCALE GENOMIC DNA]</scope>
    <source>
        <strain>CNCM I-1225 / La1 / NCC 533</strain>
    </source>
</reference>
<gene>
    <name evidence="1" type="primary">gltX</name>
    <name type="ordered locus">LJ_0399</name>
</gene>
<keyword id="KW-0030">Aminoacyl-tRNA synthetase</keyword>
<keyword id="KW-0067">ATP-binding</keyword>
<keyword id="KW-0963">Cytoplasm</keyword>
<keyword id="KW-0436">Ligase</keyword>
<keyword id="KW-0547">Nucleotide-binding</keyword>
<keyword id="KW-0648">Protein biosynthesis</keyword>
<comment type="function">
    <text evidence="1">Catalyzes the attachment of glutamate to tRNA(Glu) in a two-step reaction: glutamate is first activated by ATP to form Glu-AMP and then transferred to the acceptor end of tRNA(Glu).</text>
</comment>
<comment type="catalytic activity">
    <reaction evidence="1">
        <text>tRNA(Glu) + L-glutamate + ATP = L-glutamyl-tRNA(Glu) + AMP + diphosphate</text>
        <dbReference type="Rhea" id="RHEA:23540"/>
        <dbReference type="Rhea" id="RHEA-COMP:9663"/>
        <dbReference type="Rhea" id="RHEA-COMP:9680"/>
        <dbReference type="ChEBI" id="CHEBI:29985"/>
        <dbReference type="ChEBI" id="CHEBI:30616"/>
        <dbReference type="ChEBI" id="CHEBI:33019"/>
        <dbReference type="ChEBI" id="CHEBI:78442"/>
        <dbReference type="ChEBI" id="CHEBI:78520"/>
        <dbReference type="ChEBI" id="CHEBI:456215"/>
        <dbReference type="EC" id="6.1.1.17"/>
    </reaction>
</comment>
<comment type="subunit">
    <text evidence="1">Monomer.</text>
</comment>
<comment type="subcellular location">
    <subcellularLocation>
        <location evidence="1">Cytoplasm</location>
    </subcellularLocation>
</comment>
<comment type="similarity">
    <text evidence="1">Belongs to the class-I aminoacyl-tRNA synthetase family. Glutamate--tRNA ligase type 1 subfamily.</text>
</comment>
<name>SYE_LACJO</name>
<dbReference type="EC" id="6.1.1.17" evidence="1"/>
<dbReference type="EMBL" id="AE017198">
    <property type="protein sequence ID" value="AAS08388.1"/>
    <property type="molecule type" value="Genomic_DNA"/>
</dbReference>
<dbReference type="RefSeq" id="WP_004895777.1">
    <property type="nucleotide sequence ID" value="NC_005362.1"/>
</dbReference>
<dbReference type="SMR" id="Q74L27"/>
<dbReference type="KEGG" id="ljo:LJ_0399"/>
<dbReference type="eggNOG" id="COG0008">
    <property type="taxonomic scope" value="Bacteria"/>
</dbReference>
<dbReference type="HOGENOM" id="CLU_015768_6_1_9"/>
<dbReference type="Proteomes" id="UP000000581">
    <property type="component" value="Chromosome"/>
</dbReference>
<dbReference type="GO" id="GO:0005829">
    <property type="term" value="C:cytosol"/>
    <property type="evidence" value="ECO:0007669"/>
    <property type="project" value="TreeGrafter"/>
</dbReference>
<dbReference type="GO" id="GO:0005524">
    <property type="term" value="F:ATP binding"/>
    <property type="evidence" value="ECO:0007669"/>
    <property type="project" value="UniProtKB-UniRule"/>
</dbReference>
<dbReference type="GO" id="GO:0004818">
    <property type="term" value="F:glutamate-tRNA ligase activity"/>
    <property type="evidence" value="ECO:0007669"/>
    <property type="project" value="UniProtKB-UniRule"/>
</dbReference>
<dbReference type="GO" id="GO:0000049">
    <property type="term" value="F:tRNA binding"/>
    <property type="evidence" value="ECO:0007669"/>
    <property type="project" value="InterPro"/>
</dbReference>
<dbReference type="GO" id="GO:0008270">
    <property type="term" value="F:zinc ion binding"/>
    <property type="evidence" value="ECO:0007669"/>
    <property type="project" value="InterPro"/>
</dbReference>
<dbReference type="GO" id="GO:0006424">
    <property type="term" value="P:glutamyl-tRNA aminoacylation"/>
    <property type="evidence" value="ECO:0007669"/>
    <property type="project" value="UniProtKB-UniRule"/>
</dbReference>
<dbReference type="CDD" id="cd00808">
    <property type="entry name" value="GluRS_core"/>
    <property type="match status" value="1"/>
</dbReference>
<dbReference type="FunFam" id="3.40.50.620:FF:000007">
    <property type="entry name" value="Glutamate--tRNA ligase"/>
    <property type="match status" value="1"/>
</dbReference>
<dbReference type="Gene3D" id="1.10.10.350">
    <property type="match status" value="1"/>
</dbReference>
<dbReference type="Gene3D" id="3.40.50.620">
    <property type="entry name" value="HUPs"/>
    <property type="match status" value="1"/>
</dbReference>
<dbReference type="HAMAP" id="MF_00022">
    <property type="entry name" value="Glu_tRNA_synth_type1"/>
    <property type="match status" value="1"/>
</dbReference>
<dbReference type="InterPro" id="IPR045462">
    <property type="entry name" value="aa-tRNA-synth_I_cd-bd"/>
</dbReference>
<dbReference type="InterPro" id="IPR020751">
    <property type="entry name" value="aa-tRNA-synth_I_codon-bd_sub2"/>
</dbReference>
<dbReference type="InterPro" id="IPR001412">
    <property type="entry name" value="aa-tRNA-synth_I_CS"/>
</dbReference>
<dbReference type="InterPro" id="IPR008925">
    <property type="entry name" value="aa_tRNA-synth_I_cd-bd_sf"/>
</dbReference>
<dbReference type="InterPro" id="IPR004527">
    <property type="entry name" value="Glu-tRNA-ligase_bac/mito"/>
</dbReference>
<dbReference type="InterPro" id="IPR000924">
    <property type="entry name" value="Glu/Gln-tRNA-synth"/>
</dbReference>
<dbReference type="InterPro" id="IPR020058">
    <property type="entry name" value="Glu/Gln-tRNA-synth_Ib_cat-dom"/>
</dbReference>
<dbReference type="InterPro" id="IPR049940">
    <property type="entry name" value="GluQ/Sye"/>
</dbReference>
<dbReference type="InterPro" id="IPR033910">
    <property type="entry name" value="GluRS_core"/>
</dbReference>
<dbReference type="InterPro" id="IPR014729">
    <property type="entry name" value="Rossmann-like_a/b/a_fold"/>
</dbReference>
<dbReference type="NCBIfam" id="TIGR00464">
    <property type="entry name" value="gltX_bact"/>
    <property type="match status" value="1"/>
</dbReference>
<dbReference type="PANTHER" id="PTHR43311">
    <property type="entry name" value="GLUTAMATE--TRNA LIGASE"/>
    <property type="match status" value="1"/>
</dbReference>
<dbReference type="PANTHER" id="PTHR43311:SF2">
    <property type="entry name" value="GLUTAMATE--TRNA LIGASE, MITOCHONDRIAL-RELATED"/>
    <property type="match status" value="1"/>
</dbReference>
<dbReference type="Pfam" id="PF19269">
    <property type="entry name" value="Anticodon_2"/>
    <property type="match status" value="1"/>
</dbReference>
<dbReference type="Pfam" id="PF00749">
    <property type="entry name" value="tRNA-synt_1c"/>
    <property type="match status" value="1"/>
</dbReference>
<dbReference type="PRINTS" id="PR00987">
    <property type="entry name" value="TRNASYNTHGLU"/>
</dbReference>
<dbReference type="SUPFAM" id="SSF48163">
    <property type="entry name" value="An anticodon-binding domain of class I aminoacyl-tRNA synthetases"/>
    <property type="match status" value="1"/>
</dbReference>
<dbReference type="SUPFAM" id="SSF52374">
    <property type="entry name" value="Nucleotidylyl transferase"/>
    <property type="match status" value="1"/>
</dbReference>
<dbReference type="PROSITE" id="PS00178">
    <property type="entry name" value="AA_TRNA_LIGASE_I"/>
    <property type="match status" value="1"/>
</dbReference>
<organism>
    <name type="scientific">Lactobacillus johnsonii (strain CNCM I-12250 / La1 / NCC 533)</name>
    <dbReference type="NCBI Taxonomy" id="257314"/>
    <lineage>
        <taxon>Bacteria</taxon>
        <taxon>Bacillati</taxon>
        <taxon>Bacillota</taxon>
        <taxon>Bacilli</taxon>
        <taxon>Lactobacillales</taxon>
        <taxon>Lactobacillaceae</taxon>
        <taxon>Lactobacillus</taxon>
    </lineage>
</organism>
<accession>Q74L27</accession>
<sequence>MAKQKIRVRYAPSPTGHLHIGNARTALFNYLFARHNKGTMVLRIEDTDQKRNVEGGSKSQMENLHWLGIDWDEGPDKGGDFGPYRQSERKDIYNKYIQQLIDEGKAYYSYKTEEELEAQREEQRAMGIAPHYTYEYEGMTADEIKEAQAAAEAKGLKPVVRIHIPENRTYAWEDMVKGKVSFESDTIGGDFVIQKRDGMPTYNFAVVIDDHLMEITHVLRGDDHVANTPKQLVVYEALGWEPPKFGHMTLIINSETGKKLSKRDESVLQFIEQYRDLGYLPDAMFNFITLLGWSPVGESEIFSQRELIKSFDPKRLSKSPAAFDQKKLEWINNQYVKKADRDLLLDLALNNLQEAGLVDKEISPEKMEWVRQLVNIYAVQMSYTKQIVDIAKIFFEEAPELSDAEIEEIKKDDARPVIEEFKKQLNAVPRFTAVQAMNAIQATRRETGVKGRKLFMPIRIAATRSMVGPGIGEAIELMGKEKVNKHIDLTLKQLSDLGL</sequence>
<feature type="chain" id="PRO_0000119583" description="Glutamate--tRNA ligase">
    <location>
        <begin position="1"/>
        <end position="499"/>
    </location>
</feature>
<feature type="short sequence motif" description="'HIGH' region" evidence="1">
    <location>
        <begin position="12"/>
        <end position="22"/>
    </location>
</feature>
<feature type="short sequence motif" description="'KMSKS' region" evidence="1">
    <location>
        <begin position="259"/>
        <end position="263"/>
    </location>
</feature>
<feature type="binding site" evidence="1">
    <location>
        <position position="262"/>
    </location>
    <ligand>
        <name>ATP</name>
        <dbReference type="ChEBI" id="CHEBI:30616"/>
    </ligand>
</feature>